<gene>
    <name type="ordered locus">Lxx09300</name>
</gene>
<keyword id="KW-1003">Cell membrane</keyword>
<keyword id="KW-0472">Membrane</keyword>
<keyword id="KW-1185">Reference proteome</keyword>
<keyword id="KW-0812">Transmembrane</keyword>
<keyword id="KW-1133">Transmembrane helix</keyword>
<dbReference type="EMBL" id="AE016822">
    <property type="protein sequence ID" value="AAT88819.1"/>
    <property type="molecule type" value="Genomic_DNA"/>
</dbReference>
<dbReference type="RefSeq" id="WP_011185817.1">
    <property type="nucleotide sequence ID" value="NC_006087.1"/>
</dbReference>
<dbReference type="SMR" id="Q6AFM6"/>
<dbReference type="STRING" id="281090.Lxx09300"/>
<dbReference type="KEGG" id="lxx:Lxx09300"/>
<dbReference type="eggNOG" id="COG1615">
    <property type="taxonomic scope" value="Bacteria"/>
</dbReference>
<dbReference type="HOGENOM" id="CLU_007733_1_0_11"/>
<dbReference type="Proteomes" id="UP000001306">
    <property type="component" value="Chromosome"/>
</dbReference>
<dbReference type="GO" id="GO:0005576">
    <property type="term" value="C:extracellular region"/>
    <property type="evidence" value="ECO:0007669"/>
    <property type="project" value="TreeGrafter"/>
</dbReference>
<dbReference type="GO" id="GO:0005886">
    <property type="term" value="C:plasma membrane"/>
    <property type="evidence" value="ECO:0007669"/>
    <property type="project" value="UniProtKB-SubCell"/>
</dbReference>
<dbReference type="HAMAP" id="MF_01600">
    <property type="entry name" value="UPF0182"/>
    <property type="match status" value="1"/>
</dbReference>
<dbReference type="InterPro" id="IPR005372">
    <property type="entry name" value="UPF0182"/>
</dbReference>
<dbReference type="PANTHER" id="PTHR39344">
    <property type="entry name" value="UPF0182 PROTEIN SLL1060"/>
    <property type="match status" value="1"/>
</dbReference>
<dbReference type="PANTHER" id="PTHR39344:SF1">
    <property type="entry name" value="UPF0182 PROTEIN SLL1060"/>
    <property type="match status" value="1"/>
</dbReference>
<dbReference type="Pfam" id="PF03699">
    <property type="entry name" value="UPF0182"/>
    <property type="match status" value="1"/>
</dbReference>
<sequence length="987" mass="106374">MTSAAAVRSPGRRRAAVWTTLGVIVALVILFFIFAGLYADILWYQQFGFLSVLTTQWFAAIAMFFVGFLGMALPLWVVIQLAYRLRPVYAKLNSQLDRYQQVIEPLRRLAMYGIPIVFGIFAGVSAASRWQTAAMWINGTPYGKTDPLFHLDIGFYLFALPFYRSAVGFASAVVLISLLATLATCYLYGSIRLSGREVRIARAARVQISVIAAVYLLLQGVSVWLDRYATVTDANVNNMINGAAYTDVSATIPGQAVLAVAAVFVALLFAVTAFTGRWRFPVVGTALLIVAALVIGAIYPWAIQRFQVEPSQKTLETPYIQDSIEATRDAYGLSDIDVVPYNATTSAEAGALRQDAQTTAQIRIMDPAVISPSFQQLQQFRQYYSFPRNLNVDRYTLNGSQQDAVVSVRELNQSGLTSRSWYNDTVVYTHGYGMVAAYGNQRSSDGQPVFMEYGIPTQGTFGAYEPRVYFGQQSPTYSIVGAQKSAKSIELDYPGGDNDAQQTYTTFSGDGGPKLDNIFNRLVYALKFQDEQIVLSTAVNKDSQILYDRDPIKRVKKAAPYLTMDSQAYPAVIDGRIKWVVDGYTTSNQFPYSHVGSLSDAIADTETPKSAYAFDDINYIRNSVKATVDAYDGSVTLYAWDAKDPVLKTWQKIFPSTIKPISAMSAQLLQHVRYPSDLFKVQRSVLGQYHVTDAGSFYSRDDAWTTPNDPTSSPTDPTLQPPYYLTMQMPGQKAPTFSLYTTFIPQAASDSSRSILKGYLAVDADAGSTKGKVAPGYGKLRLLSLPSSDTIPGPGQVQNNFNSDPTVSQELNLLRQGKTDVTNGNLLTLPVGGGLLYVQPVYVKSTGETSYPILQKVLVAFGDKIAFEDTLDQALDSLFGGDSGATAGDNNVPATPGGSGGGSSGDAGSSAGGGSSGGGGSSAGGSSSGSGSSGTQSNAALQRALQQAKQALSDREAALKAGDWAAYGAADSRLQQALQAAIAAEGR</sequence>
<organism>
    <name type="scientific">Leifsonia xyli subsp. xyli (strain CTCB07)</name>
    <dbReference type="NCBI Taxonomy" id="281090"/>
    <lineage>
        <taxon>Bacteria</taxon>
        <taxon>Bacillati</taxon>
        <taxon>Actinomycetota</taxon>
        <taxon>Actinomycetes</taxon>
        <taxon>Micrococcales</taxon>
        <taxon>Microbacteriaceae</taxon>
        <taxon>Leifsonia</taxon>
    </lineage>
</organism>
<feature type="chain" id="PRO_0000157719" description="UPF0182 protein Lxx09300">
    <location>
        <begin position="1"/>
        <end position="987"/>
    </location>
</feature>
<feature type="transmembrane region" description="Helical" evidence="1">
    <location>
        <begin position="17"/>
        <end position="37"/>
    </location>
</feature>
<feature type="transmembrane region" description="Helical" evidence="1">
    <location>
        <begin position="59"/>
        <end position="79"/>
    </location>
</feature>
<feature type="transmembrane region" description="Helical" evidence="1">
    <location>
        <begin position="108"/>
        <end position="128"/>
    </location>
</feature>
<feature type="transmembrane region" description="Helical" evidence="1">
    <location>
        <begin position="167"/>
        <end position="187"/>
    </location>
</feature>
<feature type="transmembrane region" description="Helical" evidence="1">
    <location>
        <begin position="206"/>
        <end position="226"/>
    </location>
</feature>
<feature type="transmembrane region" description="Helical" evidence="1">
    <location>
        <begin position="256"/>
        <end position="276"/>
    </location>
</feature>
<feature type="transmembrane region" description="Helical" evidence="1">
    <location>
        <begin position="283"/>
        <end position="303"/>
    </location>
</feature>
<feature type="region of interest" description="Disordered" evidence="2">
    <location>
        <begin position="700"/>
        <end position="719"/>
    </location>
</feature>
<feature type="region of interest" description="Disordered" evidence="2">
    <location>
        <begin position="886"/>
        <end position="947"/>
    </location>
</feature>
<feature type="compositionally biased region" description="Low complexity" evidence="2">
    <location>
        <begin position="705"/>
        <end position="719"/>
    </location>
</feature>
<feature type="compositionally biased region" description="Gly residues" evidence="2">
    <location>
        <begin position="897"/>
        <end position="932"/>
    </location>
</feature>
<feature type="compositionally biased region" description="Low complexity" evidence="2">
    <location>
        <begin position="933"/>
        <end position="947"/>
    </location>
</feature>
<evidence type="ECO:0000255" key="1">
    <source>
        <dbReference type="HAMAP-Rule" id="MF_01600"/>
    </source>
</evidence>
<evidence type="ECO:0000256" key="2">
    <source>
        <dbReference type="SAM" id="MobiDB-lite"/>
    </source>
</evidence>
<accession>Q6AFM6</accession>
<proteinExistence type="inferred from homology"/>
<comment type="subcellular location">
    <subcellularLocation>
        <location evidence="1">Cell membrane</location>
        <topology evidence="1">Multi-pass membrane protein</topology>
    </subcellularLocation>
</comment>
<comment type="similarity">
    <text evidence="1">Belongs to the UPF0182 family.</text>
</comment>
<protein>
    <recommendedName>
        <fullName evidence="1">UPF0182 protein Lxx09300</fullName>
    </recommendedName>
</protein>
<reference key="1">
    <citation type="journal article" date="2004" name="Mol. Plant Microbe Interact.">
        <title>The genome sequence of the Gram-positive sugarcane pathogen Leifsonia xyli subsp. xyli.</title>
        <authorList>
            <person name="Monteiro-Vitorello C.B."/>
            <person name="Camargo L.E.A."/>
            <person name="Van Sluys M.A."/>
            <person name="Kitajima J.P."/>
            <person name="Truffi D."/>
            <person name="do Amaral A.M."/>
            <person name="Harakava R."/>
            <person name="de Oliveira J.C.F."/>
            <person name="Wood D."/>
            <person name="de Oliveira M.C."/>
            <person name="Miyaki C.Y."/>
            <person name="Takita M.A."/>
            <person name="da Silva A.C.R."/>
            <person name="Furlan L.R."/>
            <person name="Carraro D.M."/>
            <person name="Camarotte G."/>
            <person name="Almeida N.F. Jr."/>
            <person name="Carrer H."/>
            <person name="Coutinho L.L."/>
            <person name="El-Dorry H.A."/>
            <person name="Ferro M.I.T."/>
            <person name="Gagliardi P.R."/>
            <person name="Giglioti E."/>
            <person name="Goldman M.H.S."/>
            <person name="Goldman G.H."/>
            <person name="Kimura E.T."/>
            <person name="Ferro E.S."/>
            <person name="Kuramae E.E."/>
            <person name="Lemos E.G.M."/>
            <person name="Lemos M.V.F."/>
            <person name="Mauro S.M.Z."/>
            <person name="Machado M.A."/>
            <person name="Marino C.L."/>
            <person name="Menck C.F."/>
            <person name="Nunes L.R."/>
            <person name="Oliveira R.C."/>
            <person name="Pereira G.G."/>
            <person name="Siqueira W."/>
            <person name="de Souza A.A."/>
            <person name="Tsai S.M."/>
            <person name="Zanca A.S."/>
            <person name="Simpson A.J.G."/>
            <person name="Brumbley S.M."/>
            <person name="Setubal J.C."/>
        </authorList>
    </citation>
    <scope>NUCLEOTIDE SEQUENCE [LARGE SCALE GENOMIC DNA]</scope>
    <source>
        <strain>CTCB07</strain>
    </source>
</reference>
<name>Y930_LEIXX</name>